<sequence>MDSRMSDLQALRGFLGGSERLFVLTGAGCSTASGIPDYRDGQGQWKRKPPIDFQAFMGGQPARARYWARSMVGWRHFGQARPNAAHHALARLAQRGQVDLLVTQNVDRLHQAAGGREVLDLHGRLDEVRCMQCDWRGPRGPWQHTLELANPQWAALQAGAAPDGNADLEGQDFSRFVVPSCPRCGGIVKPDVVFFGETVPRERVQRAYAALEHADAVLVVGSSLMLYSGYRFVQAAARAGLPIAAINLGRTRADDMLALKVSRPCDEVLAEVVP</sequence>
<name>NPD_BORPE</name>
<proteinExistence type="inferred from homology"/>
<dbReference type="EC" id="2.3.1.286" evidence="1 2"/>
<dbReference type="EMBL" id="BX640416">
    <property type="protein sequence ID" value="CAE42254.1"/>
    <property type="molecule type" value="Genomic_DNA"/>
</dbReference>
<dbReference type="RefSeq" id="NP_880650.1">
    <property type="nucleotide sequence ID" value="NC_002929.2"/>
</dbReference>
<dbReference type="RefSeq" id="WP_010930667.1">
    <property type="nucleotide sequence ID" value="NZ_CP039022.1"/>
</dbReference>
<dbReference type="SMR" id="Q7VX46"/>
<dbReference type="STRING" id="257313.BP1974"/>
<dbReference type="PaxDb" id="257313-BP1974"/>
<dbReference type="KEGG" id="bpe:BP1974"/>
<dbReference type="PATRIC" id="fig|257313.5.peg.2123"/>
<dbReference type="eggNOG" id="COG0846">
    <property type="taxonomic scope" value="Bacteria"/>
</dbReference>
<dbReference type="HOGENOM" id="CLU_023643_3_2_4"/>
<dbReference type="Proteomes" id="UP000002676">
    <property type="component" value="Chromosome"/>
</dbReference>
<dbReference type="GO" id="GO:0005737">
    <property type="term" value="C:cytoplasm"/>
    <property type="evidence" value="ECO:0007669"/>
    <property type="project" value="UniProtKB-SubCell"/>
</dbReference>
<dbReference type="GO" id="GO:0017136">
    <property type="term" value="F:histone deacetylase activity, NAD-dependent"/>
    <property type="evidence" value="ECO:0007669"/>
    <property type="project" value="TreeGrafter"/>
</dbReference>
<dbReference type="GO" id="GO:0070403">
    <property type="term" value="F:NAD+ binding"/>
    <property type="evidence" value="ECO:0007669"/>
    <property type="project" value="UniProtKB-UniRule"/>
</dbReference>
<dbReference type="GO" id="GO:0008270">
    <property type="term" value="F:zinc ion binding"/>
    <property type="evidence" value="ECO:0007669"/>
    <property type="project" value="UniProtKB-UniRule"/>
</dbReference>
<dbReference type="Gene3D" id="3.30.1600.10">
    <property type="entry name" value="SIR2/SIRT2 'Small Domain"/>
    <property type="match status" value="1"/>
</dbReference>
<dbReference type="Gene3D" id="3.40.50.1220">
    <property type="entry name" value="TPP-binding domain"/>
    <property type="match status" value="1"/>
</dbReference>
<dbReference type="HAMAP" id="MF_01967">
    <property type="entry name" value="Sirtuin_ClassII"/>
    <property type="match status" value="1"/>
</dbReference>
<dbReference type="InterPro" id="IPR029035">
    <property type="entry name" value="DHS-like_NAD/FAD-binding_dom"/>
</dbReference>
<dbReference type="InterPro" id="IPR050134">
    <property type="entry name" value="NAD-dep_sirtuin_deacylases"/>
</dbReference>
<dbReference type="InterPro" id="IPR003000">
    <property type="entry name" value="Sirtuin"/>
</dbReference>
<dbReference type="InterPro" id="IPR026591">
    <property type="entry name" value="Sirtuin_cat_small_dom_sf"/>
</dbReference>
<dbReference type="InterPro" id="IPR026587">
    <property type="entry name" value="Sirtuin_class_II"/>
</dbReference>
<dbReference type="InterPro" id="IPR026590">
    <property type="entry name" value="Ssirtuin_cat_dom"/>
</dbReference>
<dbReference type="NCBIfam" id="NF003738">
    <property type="entry name" value="PRK05333.1"/>
    <property type="match status" value="1"/>
</dbReference>
<dbReference type="PANTHER" id="PTHR11085">
    <property type="entry name" value="NAD-DEPENDENT PROTEIN DEACYLASE SIRTUIN-5, MITOCHONDRIAL-RELATED"/>
    <property type="match status" value="1"/>
</dbReference>
<dbReference type="PANTHER" id="PTHR11085:SF10">
    <property type="entry name" value="NAD-DEPENDENT PROTEIN DEACYLASE SIRTUIN-5, MITOCHONDRIAL-RELATED"/>
    <property type="match status" value="1"/>
</dbReference>
<dbReference type="Pfam" id="PF02146">
    <property type="entry name" value="SIR2"/>
    <property type="match status" value="1"/>
</dbReference>
<dbReference type="SUPFAM" id="SSF52467">
    <property type="entry name" value="DHS-like NAD/FAD-binding domain"/>
    <property type="match status" value="1"/>
</dbReference>
<dbReference type="PROSITE" id="PS50305">
    <property type="entry name" value="SIRTUIN"/>
    <property type="match status" value="1"/>
</dbReference>
<gene>
    <name evidence="1" type="primary">cobB</name>
    <name type="ordered locus">BP1974</name>
</gene>
<keyword id="KW-0963">Cytoplasm</keyword>
<keyword id="KW-0479">Metal-binding</keyword>
<keyword id="KW-0520">NAD</keyword>
<keyword id="KW-1185">Reference proteome</keyword>
<keyword id="KW-0808">Transferase</keyword>
<keyword id="KW-0862">Zinc</keyword>
<evidence type="ECO:0000255" key="1">
    <source>
        <dbReference type="HAMAP-Rule" id="MF_01967"/>
    </source>
</evidence>
<evidence type="ECO:0000255" key="2">
    <source>
        <dbReference type="PROSITE-ProRule" id="PRU00236"/>
    </source>
</evidence>
<comment type="function">
    <text evidence="1">NAD-dependent protein deacetylase which modulates the activities of several enzymes which are inactive in their acetylated form.</text>
</comment>
<comment type="catalytic activity">
    <reaction evidence="1">
        <text>N(6)-acetyl-L-lysyl-[protein] + NAD(+) + H2O = 2''-O-acetyl-ADP-D-ribose + nicotinamide + L-lysyl-[protein]</text>
        <dbReference type="Rhea" id="RHEA:43636"/>
        <dbReference type="Rhea" id="RHEA-COMP:9752"/>
        <dbReference type="Rhea" id="RHEA-COMP:10731"/>
        <dbReference type="ChEBI" id="CHEBI:15377"/>
        <dbReference type="ChEBI" id="CHEBI:17154"/>
        <dbReference type="ChEBI" id="CHEBI:29969"/>
        <dbReference type="ChEBI" id="CHEBI:57540"/>
        <dbReference type="ChEBI" id="CHEBI:61930"/>
        <dbReference type="ChEBI" id="CHEBI:83767"/>
        <dbReference type="EC" id="2.3.1.286"/>
    </reaction>
</comment>
<comment type="cofactor">
    <cofactor evidence="1">
        <name>Zn(2+)</name>
        <dbReference type="ChEBI" id="CHEBI:29105"/>
    </cofactor>
    <text evidence="1">Binds 1 zinc ion per subunit.</text>
</comment>
<comment type="subcellular location">
    <subcellularLocation>
        <location evidence="1">Cytoplasm</location>
    </subcellularLocation>
</comment>
<comment type="similarity">
    <text evidence="1">Belongs to the sirtuin family. Class II subfamily.</text>
</comment>
<reference key="1">
    <citation type="journal article" date="2003" name="Nat. Genet.">
        <title>Comparative analysis of the genome sequences of Bordetella pertussis, Bordetella parapertussis and Bordetella bronchiseptica.</title>
        <authorList>
            <person name="Parkhill J."/>
            <person name="Sebaihia M."/>
            <person name="Preston A."/>
            <person name="Murphy L.D."/>
            <person name="Thomson N.R."/>
            <person name="Harris D.E."/>
            <person name="Holden M.T.G."/>
            <person name="Churcher C.M."/>
            <person name="Bentley S.D."/>
            <person name="Mungall K.L."/>
            <person name="Cerdeno-Tarraga A.-M."/>
            <person name="Temple L."/>
            <person name="James K.D."/>
            <person name="Harris B."/>
            <person name="Quail M.A."/>
            <person name="Achtman M."/>
            <person name="Atkin R."/>
            <person name="Baker S."/>
            <person name="Basham D."/>
            <person name="Bason N."/>
            <person name="Cherevach I."/>
            <person name="Chillingworth T."/>
            <person name="Collins M."/>
            <person name="Cronin A."/>
            <person name="Davis P."/>
            <person name="Doggett J."/>
            <person name="Feltwell T."/>
            <person name="Goble A."/>
            <person name="Hamlin N."/>
            <person name="Hauser H."/>
            <person name="Holroyd S."/>
            <person name="Jagels K."/>
            <person name="Leather S."/>
            <person name="Moule S."/>
            <person name="Norberczak H."/>
            <person name="O'Neil S."/>
            <person name="Ormond D."/>
            <person name="Price C."/>
            <person name="Rabbinowitsch E."/>
            <person name="Rutter S."/>
            <person name="Sanders M."/>
            <person name="Saunders D."/>
            <person name="Seeger K."/>
            <person name="Sharp S."/>
            <person name="Simmonds M."/>
            <person name="Skelton J."/>
            <person name="Squares R."/>
            <person name="Squares S."/>
            <person name="Stevens K."/>
            <person name="Unwin L."/>
            <person name="Whitehead S."/>
            <person name="Barrell B.G."/>
            <person name="Maskell D.J."/>
        </authorList>
    </citation>
    <scope>NUCLEOTIDE SEQUENCE [LARGE SCALE GENOMIC DNA]</scope>
    <source>
        <strain>Tohama I / ATCC BAA-589 / NCTC 13251</strain>
    </source>
</reference>
<protein>
    <recommendedName>
        <fullName evidence="1">NAD-dependent protein deacetylase</fullName>
        <ecNumber evidence="1 2">2.3.1.286</ecNumber>
    </recommendedName>
    <alternativeName>
        <fullName evidence="1">Regulatory protein SIR2 homolog</fullName>
    </alternativeName>
</protein>
<feature type="chain" id="PRO_0000110298" description="NAD-dependent protein deacetylase">
    <location>
        <begin position="1"/>
        <end position="274"/>
    </location>
</feature>
<feature type="domain" description="Deacetylase sirtuin-type" evidence="2">
    <location>
        <begin position="1"/>
        <end position="274"/>
    </location>
</feature>
<feature type="active site" description="Proton acceptor" evidence="2">
    <location>
        <position position="122"/>
    </location>
</feature>
<feature type="binding site" evidence="1">
    <location>
        <begin position="26"/>
        <end position="46"/>
    </location>
    <ligand>
        <name>NAD(+)</name>
        <dbReference type="ChEBI" id="CHEBI:57540"/>
    </ligand>
</feature>
<feature type="binding site" evidence="1">
    <location>
        <begin position="104"/>
        <end position="107"/>
    </location>
    <ligand>
        <name>NAD(+)</name>
        <dbReference type="ChEBI" id="CHEBI:57540"/>
    </ligand>
</feature>
<feature type="binding site" evidence="1">
    <location>
        <position position="130"/>
    </location>
    <ligand>
        <name>Zn(2+)</name>
        <dbReference type="ChEBI" id="CHEBI:29105"/>
    </ligand>
</feature>
<feature type="binding site" evidence="1">
    <location>
        <position position="133"/>
    </location>
    <ligand>
        <name>Zn(2+)</name>
        <dbReference type="ChEBI" id="CHEBI:29105"/>
    </ligand>
</feature>
<feature type="binding site" evidence="1">
    <location>
        <position position="181"/>
    </location>
    <ligand>
        <name>Zn(2+)</name>
        <dbReference type="ChEBI" id="CHEBI:29105"/>
    </ligand>
</feature>
<feature type="binding site" evidence="1">
    <location>
        <position position="184"/>
    </location>
    <ligand>
        <name>Zn(2+)</name>
        <dbReference type="ChEBI" id="CHEBI:29105"/>
    </ligand>
</feature>
<feature type="binding site" evidence="1">
    <location>
        <begin position="221"/>
        <end position="223"/>
    </location>
    <ligand>
        <name>NAD(+)</name>
        <dbReference type="ChEBI" id="CHEBI:57540"/>
    </ligand>
</feature>
<feature type="binding site" evidence="1">
    <location>
        <begin position="247"/>
        <end position="249"/>
    </location>
    <ligand>
        <name>NAD(+)</name>
        <dbReference type="ChEBI" id="CHEBI:57540"/>
    </ligand>
</feature>
<feature type="binding site" evidence="1">
    <location>
        <position position="265"/>
    </location>
    <ligand>
        <name>NAD(+)</name>
        <dbReference type="ChEBI" id="CHEBI:57540"/>
    </ligand>
</feature>
<accession>Q7VX46</accession>
<organism>
    <name type="scientific">Bordetella pertussis (strain Tohama I / ATCC BAA-589 / NCTC 13251)</name>
    <dbReference type="NCBI Taxonomy" id="257313"/>
    <lineage>
        <taxon>Bacteria</taxon>
        <taxon>Pseudomonadati</taxon>
        <taxon>Pseudomonadota</taxon>
        <taxon>Betaproteobacteria</taxon>
        <taxon>Burkholderiales</taxon>
        <taxon>Alcaligenaceae</taxon>
        <taxon>Bordetella</taxon>
    </lineage>
</organism>